<sequence length="372" mass="41103">MVVDLDKYLKPGKDHYLALGLEGSANKLGVGVIKHNKGPLSSTNRAEVLSNIRDTYITPPGEGFLPRDTARHHRNWVVRIIKQALATAKIAGKDIDVICFTQGPGMGAPLQSVVIAARTLAQLWNIPIVGVNHCVGHIEMGREITGAENPVVLYVSGGNTQVIAYSKQRYRIFGETLDIAIGNCLDRFARTLKIPNEPAPGYNIEQMAKKGKHLVPLPYTVKGMDLSMSGILAAIDSIAKEMFGKQQKKLIDEESGEPITAEDLCFSLQETLFSMLVEITERALAHVDSNQVLIVGGVGSNQRLQEMMKLMIQDRKNGQIYATDERFCIDNGIMIAHAGLLSYRTGQTNQLNNTVCTQRFRTDEVFVKWRDD</sequence>
<name>KAE1_CANAL</name>
<feature type="chain" id="PRO_0000278929" description="tRNA N6-adenosine threonylcarbamoyltransferase">
    <location>
        <begin position="1"/>
        <end position="372"/>
    </location>
</feature>
<feature type="binding site" evidence="1">
    <location>
        <position position="133"/>
    </location>
    <ligand>
        <name>a divalent metal cation</name>
        <dbReference type="ChEBI" id="CHEBI:60240"/>
    </ligand>
</feature>
<feature type="binding site" evidence="1">
    <location>
        <position position="137"/>
    </location>
    <ligand>
        <name>a divalent metal cation</name>
        <dbReference type="ChEBI" id="CHEBI:60240"/>
    </ligand>
</feature>
<feature type="binding site" evidence="1">
    <location>
        <begin position="154"/>
        <end position="158"/>
    </location>
    <ligand>
        <name>substrate</name>
    </ligand>
</feature>
<feature type="binding site" evidence="1">
    <location>
        <position position="154"/>
    </location>
    <ligand>
        <name>a divalent metal cation</name>
        <dbReference type="ChEBI" id="CHEBI:60240"/>
    </ligand>
</feature>
<feature type="binding site" evidence="1">
    <location>
        <position position="186"/>
    </location>
    <ligand>
        <name>substrate</name>
    </ligand>
</feature>
<feature type="binding site" evidence="1">
    <location>
        <position position="201"/>
    </location>
    <ligand>
        <name>substrate</name>
    </ligand>
</feature>
<feature type="binding site" evidence="1">
    <location>
        <position position="205"/>
    </location>
    <ligand>
        <name>substrate</name>
    </ligand>
</feature>
<feature type="binding site" evidence="1">
    <location>
        <position position="301"/>
    </location>
    <ligand>
        <name>substrate</name>
    </ligand>
</feature>
<feature type="binding site" evidence="1">
    <location>
        <position position="330"/>
    </location>
    <ligand>
        <name>a divalent metal cation</name>
        <dbReference type="ChEBI" id="CHEBI:60240"/>
    </ligand>
</feature>
<evidence type="ECO:0000255" key="1">
    <source>
        <dbReference type="HAMAP-Rule" id="MF_03180"/>
    </source>
</evidence>
<gene>
    <name evidence="1" type="primary">KAE1</name>
    <name type="ordered locus">CAALFM_C404920WA</name>
    <name type="ORF">CaO19.11267</name>
    <name type="ORF">CaO19.3787</name>
</gene>
<keyword id="KW-0010">Activator</keyword>
<keyword id="KW-0012">Acyltransferase</keyword>
<keyword id="KW-0963">Cytoplasm</keyword>
<keyword id="KW-0479">Metal-binding</keyword>
<keyword id="KW-0539">Nucleus</keyword>
<keyword id="KW-1185">Reference proteome</keyword>
<keyword id="KW-0804">Transcription</keyword>
<keyword id="KW-0805">Transcription regulation</keyword>
<keyword id="KW-0808">Transferase</keyword>
<keyword id="KW-0819">tRNA processing</keyword>
<comment type="function">
    <text evidence="1">Component of the EKC/KEOPS complex that is required for the formation of a threonylcarbamoyl group on adenosine at position 37 (t(6)A37) in tRNAs that read codons beginning with adenine. The complex is probably involved in the transfer of the threonylcarbamoyl moiety of threonylcarbamoyl-AMP (TC-AMP) to the N6 group of A37. KAE1 likely plays a direct catalytic role in this reaction, but requires other protein(s) of the complex to fulfill this activity. The EKC/KEOPS complex also promotes both telomere uncapping and telomere elongation. The complex is required for efficient recruitment of transcriptional coactivators.</text>
</comment>
<comment type="catalytic activity">
    <reaction evidence="1">
        <text>L-threonylcarbamoyladenylate + adenosine(37) in tRNA = N(6)-L-threonylcarbamoyladenosine(37) in tRNA + AMP + H(+)</text>
        <dbReference type="Rhea" id="RHEA:37059"/>
        <dbReference type="Rhea" id="RHEA-COMP:10162"/>
        <dbReference type="Rhea" id="RHEA-COMP:10163"/>
        <dbReference type="ChEBI" id="CHEBI:15378"/>
        <dbReference type="ChEBI" id="CHEBI:73682"/>
        <dbReference type="ChEBI" id="CHEBI:74411"/>
        <dbReference type="ChEBI" id="CHEBI:74418"/>
        <dbReference type="ChEBI" id="CHEBI:456215"/>
        <dbReference type="EC" id="2.3.1.234"/>
    </reaction>
</comment>
<comment type="cofactor">
    <cofactor evidence="1">
        <name>a divalent metal cation</name>
        <dbReference type="ChEBI" id="CHEBI:60240"/>
    </cofactor>
    <text evidence="1">Binds 1 divalent metal cation per subunit.</text>
</comment>
<comment type="subunit">
    <text evidence="1">Component of the EKC/KEOPS complex composed of at least BUD32, CGI121, GON7, KAE1 and PCC1; the whole complex dimerizes.</text>
</comment>
<comment type="subcellular location">
    <subcellularLocation>
        <location evidence="1">Cytoplasm</location>
    </subcellularLocation>
    <subcellularLocation>
        <location evidence="1">Nucleus</location>
    </subcellularLocation>
</comment>
<comment type="similarity">
    <text evidence="1">Belongs to the KAE1 / TsaD family.</text>
</comment>
<accession>Q5A6A4</accession>
<accession>A0A1D8PM76</accession>
<accession>Q5A6I5</accession>
<proteinExistence type="inferred from homology"/>
<protein>
    <recommendedName>
        <fullName evidence="1">tRNA N6-adenosine threonylcarbamoyltransferase</fullName>
        <ecNumber evidence="1">2.3.1.234</ecNumber>
    </recommendedName>
    <alternativeName>
        <fullName>N6-L-threonylcarbamoyladenine synthase</fullName>
        <shortName>t(6)A synthase</shortName>
    </alternativeName>
    <alternativeName>
        <fullName evidence="1">t(6)A37 threonylcarbamoyladenosine biosynthesis protein KAE1</fullName>
    </alternativeName>
    <alternativeName>
        <fullName evidence="1">tRNA threonylcarbamoyladenosine biosynthesis protein KAE1</fullName>
    </alternativeName>
</protein>
<dbReference type="EC" id="2.3.1.234" evidence="1"/>
<dbReference type="EMBL" id="CP017626">
    <property type="protein sequence ID" value="AOW29235.1"/>
    <property type="molecule type" value="Genomic_DNA"/>
</dbReference>
<dbReference type="RefSeq" id="XP_717192.1">
    <property type="nucleotide sequence ID" value="XM_712099.1"/>
</dbReference>
<dbReference type="SMR" id="Q5A6A4"/>
<dbReference type="FunCoup" id="Q5A6A4">
    <property type="interactions" value="612"/>
</dbReference>
<dbReference type="STRING" id="237561.Q5A6A4"/>
<dbReference type="EnsemblFungi" id="C4_04920W_A-T">
    <property type="protein sequence ID" value="C4_04920W_A-T-p1"/>
    <property type="gene ID" value="C4_04920W_A"/>
</dbReference>
<dbReference type="GeneID" id="3641172"/>
<dbReference type="KEGG" id="cal:CAALFM_C404920WA"/>
<dbReference type="CGD" id="CAL0000176786">
    <property type="gene designation" value="orf19.11267"/>
</dbReference>
<dbReference type="VEuPathDB" id="FungiDB:C4_04920W_A"/>
<dbReference type="eggNOG" id="KOG2708">
    <property type="taxonomic scope" value="Eukaryota"/>
</dbReference>
<dbReference type="HOGENOM" id="CLU_023208_2_2_1"/>
<dbReference type="InParanoid" id="Q5A6A4"/>
<dbReference type="OMA" id="HHRSWVV"/>
<dbReference type="OrthoDB" id="10254073at2759"/>
<dbReference type="PRO" id="PR:Q5A6A4"/>
<dbReference type="Proteomes" id="UP000000559">
    <property type="component" value="Chromosome 4"/>
</dbReference>
<dbReference type="GO" id="GO:0000785">
    <property type="term" value="C:chromatin"/>
    <property type="evidence" value="ECO:0007669"/>
    <property type="project" value="EnsemblFungi"/>
</dbReference>
<dbReference type="GO" id="GO:0005737">
    <property type="term" value="C:cytoplasm"/>
    <property type="evidence" value="ECO:0000318"/>
    <property type="project" value="GO_Central"/>
</dbReference>
<dbReference type="GO" id="GO:0000408">
    <property type="term" value="C:EKC/KEOPS complex"/>
    <property type="evidence" value="ECO:0000318"/>
    <property type="project" value="GO_Central"/>
</dbReference>
<dbReference type="GO" id="GO:0005634">
    <property type="term" value="C:nucleus"/>
    <property type="evidence" value="ECO:0007669"/>
    <property type="project" value="UniProtKB-SubCell"/>
</dbReference>
<dbReference type="GO" id="GO:0031490">
    <property type="term" value="F:chromatin DNA binding"/>
    <property type="evidence" value="ECO:0007669"/>
    <property type="project" value="EnsemblFungi"/>
</dbReference>
<dbReference type="GO" id="GO:0046872">
    <property type="term" value="F:metal ion binding"/>
    <property type="evidence" value="ECO:0007669"/>
    <property type="project" value="UniProtKB-KW"/>
</dbReference>
<dbReference type="GO" id="GO:0061711">
    <property type="term" value="F:N(6)-L-threonylcarbamoyladenine synthase activity"/>
    <property type="evidence" value="ECO:0007669"/>
    <property type="project" value="UniProtKB-EC"/>
</dbReference>
<dbReference type="GO" id="GO:0008252">
    <property type="term" value="F:nucleotidase activity"/>
    <property type="evidence" value="ECO:0007669"/>
    <property type="project" value="EnsemblFungi"/>
</dbReference>
<dbReference type="GO" id="GO:0045944">
    <property type="term" value="P:positive regulation of transcription by RNA polymerase II"/>
    <property type="evidence" value="ECO:0007669"/>
    <property type="project" value="EnsemblFungi"/>
</dbReference>
<dbReference type="GO" id="GO:0000722">
    <property type="term" value="P:telomere maintenance via recombination"/>
    <property type="evidence" value="ECO:0007669"/>
    <property type="project" value="EnsemblFungi"/>
</dbReference>
<dbReference type="GO" id="GO:0002949">
    <property type="term" value="P:tRNA threonylcarbamoyladenosine modification"/>
    <property type="evidence" value="ECO:0007669"/>
    <property type="project" value="UniProtKB-UniRule"/>
</dbReference>
<dbReference type="CDD" id="cd24132">
    <property type="entry name" value="ASKHA_NBD_OSGEP_like_euk"/>
    <property type="match status" value="1"/>
</dbReference>
<dbReference type="FunFam" id="3.30.420.40:FF:000038">
    <property type="entry name" value="Probable tRNA N6-adenosine threonylcarbamoyltransferase"/>
    <property type="match status" value="1"/>
</dbReference>
<dbReference type="FunFam" id="3.30.420.40:FF:000295">
    <property type="entry name" value="Probable tRNA N6-adenosine threonylcarbamoyltransferase"/>
    <property type="match status" value="1"/>
</dbReference>
<dbReference type="Gene3D" id="3.30.420.40">
    <property type="match status" value="2"/>
</dbReference>
<dbReference type="HAMAP" id="MF_01446">
    <property type="entry name" value="Kae1"/>
    <property type="match status" value="1"/>
</dbReference>
<dbReference type="InterPro" id="IPR043129">
    <property type="entry name" value="ATPase_NBD"/>
</dbReference>
<dbReference type="InterPro" id="IPR000905">
    <property type="entry name" value="Gcp-like_dom"/>
</dbReference>
<dbReference type="InterPro" id="IPR017861">
    <property type="entry name" value="KAE1/TsaD"/>
</dbReference>
<dbReference type="InterPro" id="IPR034680">
    <property type="entry name" value="Kae1_archaea_euk"/>
</dbReference>
<dbReference type="InterPro" id="IPR017860">
    <property type="entry name" value="Peptidase_M22_CS"/>
</dbReference>
<dbReference type="NCBIfam" id="TIGR03722">
    <property type="entry name" value="arch_KAE1"/>
    <property type="match status" value="1"/>
</dbReference>
<dbReference type="NCBIfam" id="TIGR00329">
    <property type="entry name" value="gcp_kae1"/>
    <property type="match status" value="1"/>
</dbReference>
<dbReference type="PANTHER" id="PTHR11735">
    <property type="entry name" value="TRNA N6-ADENOSINE THREONYLCARBAMOYLTRANSFERASE"/>
    <property type="match status" value="1"/>
</dbReference>
<dbReference type="PANTHER" id="PTHR11735:SF14">
    <property type="entry name" value="TRNA N6-ADENOSINE THREONYLCARBAMOYLTRANSFERASE"/>
    <property type="match status" value="1"/>
</dbReference>
<dbReference type="Pfam" id="PF00814">
    <property type="entry name" value="TsaD"/>
    <property type="match status" value="1"/>
</dbReference>
<dbReference type="PRINTS" id="PR00789">
    <property type="entry name" value="OSIALOPTASE"/>
</dbReference>
<dbReference type="SUPFAM" id="SSF53067">
    <property type="entry name" value="Actin-like ATPase domain"/>
    <property type="match status" value="1"/>
</dbReference>
<dbReference type="PROSITE" id="PS01016">
    <property type="entry name" value="GLYCOPROTEASE"/>
    <property type="match status" value="1"/>
</dbReference>
<organism>
    <name type="scientific">Candida albicans (strain SC5314 / ATCC MYA-2876)</name>
    <name type="common">Yeast</name>
    <dbReference type="NCBI Taxonomy" id="237561"/>
    <lineage>
        <taxon>Eukaryota</taxon>
        <taxon>Fungi</taxon>
        <taxon>Dikarya</taxon>
        <taxon>Ascomycota</taxon>
        <taxon>Saccharomycotina</taxon>
        <taxon>Pichiomycetes</taxon>
        <taxon>Debaryomycetaceae</taxon>
        <taxon>Candida/Lodderomyces clade</taxon>
        <taxon>Candida</taxon>
    </lineage>
</organism>
<reference key="1">
    <citation type="journal article" date="2004" name="Proc. Natl. Acad. Sci. U.S.A.">
        <title>The diploid genome sequence of Candida albicans.</title>
        <authorList>
            <person name="Jones T."/>
            <person name="Federspiel N.A."/>
            <person name="Chibana H."/>
            <person name="Dungan J."/>
            <person name="Kalman S."/>
            <person name="Magee B.B."/>
            <person name="Newport G."/>
            <person name="Thorstenson Y.R."/>
            <person name="Agabian N."/>
            <person name="Magee P.T."/>
            <person name="Davis R.W."/>
            <person name="Scherer S."/>
        </authorList>
    </citation>
    <scope>NUCLEOTIDE SEQUENCE [LARGE SCALE GENOMIC DNA]</scope>
    <source>
        <strain>SC5314 / ATCC MYA-2876</strain>
    </source>
</reference>
<reference key="2">
    <citation type="journal article" date="2007" name="Genome Biol.">
        <title>Assembly of the Candida albicans genome into sixteen supercontigs aligned on the eight chromosomes.</title>
        <authorList>
            <person name="van het Hoog M."/>
            <person name="Rast T.J."/>
            <person name="Martchenko M."/>
            <person name="Grindle S."/>
            <person name="Dignard D."/>
            <person name="Hogues H."/>
            <person name="Cuomo C."/>
            <person name="Berriman M."/>
            <person name="Scherer S."/>
            <person name="Magee B.B."/>
            <person name="Whiteway M."/>
            <person name="Chibana H."/>
            <person name="Nantel A."/>
            <person name="Magee P.T."/>
        </authorList>
    </citation>
    <scope>GENOME REANNOTATION</scope>
    <source>
        <strain>SC5314 / ATCC MYA-2876</strain>
    </source>
</reference>
<reference key="3">
    <citation type="journal article" date="2013" name="Genome Biol.">
        <title>Assembly of a phased diploid Candida albicans genome facilitates allele-specific measurements and provides a simple model for repeat and indel structure.</title>
        <authorList>
            <person name="Muzzey D."/>
            <person name="Schwartz K."/>
            <person name="Weissman J.S."/>
            <person name="Sherlock G."/>
        </authorList>
    </citation>
    <scope>NUCLEOTIDE SEQUENCE [LARGE SCALE GENOMIC DNA]</scope>
    <scope>GENOME REANNOTATION</scope>
    <source>
        <strain>SC5314 / ATCC MYA-2876</strain>
    </source>
</reference>